<feature type="chain" id="PRO_0000332334" description="Cobyric acid synthase">
    <location>
        <begin position="1"/>
        <end position="513"/>
    </location>
</feature>
<feature type="domain" description="GATase cobBQ-type" evidence="1">
    <location>
        <begin position="252"/>
        <end position="457"/>
    </location>
</feature>
<feature type="active site" description="Nucleophile" evidence="1">
    <location>
        <position position="333"/>
    </location>
</feature>
<feature type="active site" evidence="1">
    <location>
        <position position="449"/>
    </location>
</feature>
<comment type="function">
    <text evidence="1">Catalyzes amidations at positions B, D, E, and G on adenosylcobyrinic A,C-diamide. NH(2) groups are provided by glutamine, and one molecule of ATP is hydrogenolyzed for each amidation.</text>
</comment>
<comment type="pathway">
    <text evidence="1">Cofactor biosynthesis; adenosylcobalamin biosynthesis.</text>
</comment>
<comment type="similarity">
    <text evidence="1">Belongs to the CobB/CobQ family. CobQ subfamily.</text>
</comment>
<keyword id="KW-0169">Cobalamin biosynthesis</keyword>
<keyword id="KW-0315">Glutamine amidotransferase</keyword>
<keyword id="KW-1185">Reference proteome</keyword>
<dbReference type="EMBL" id="CP000885">
    <property type="protein sequence ID" value="ABX41490.1"/>
    <property type="molecule type" value="Genomic_DNA"/>
</dbReference>
<dbReference type="RefSeq" id="WP_012199136.1">
    <property type="nucleotide sequence ID" value="NC_010001.1"/>
</dbReference>
<dbReference type="SMR" id="A9KMP5"/>
<dbReference type="STRING" id="357809.Cphy_1112"/>
<dbReference type="KEGG" id="cpy:Cphy_1112"/>
<dbReference type="eggNOG" id="COG1492">
    <property type="taxonomic scope" value="Bacteria"/>
</dbReference>
<dbReference type="HOGENOM" id="CLU_019250_2_2_9"/>
<dbReference type="OrthoDB" id="9808302at2"/>
<dbReference type="UniPathway" id="UPA00148"/>
<dbReference type="Proteomes" id="UP000000370">
    <property type="component" value="Chromosome"/>
</dbReference>
<dbReference type="GO" id="GO:0015420">
    <property type="term" value="F:ABC-type vitamin B12 transporter activity"/>
    <property type="evidence" value="ECO:0007669"/>
    <property type="project" value="UniProtKB-UniRule"/>
</dbReference>
<dbReference type="GO" id="GO:0003824">
    <property type="term" value="F:catalytic activity"/>
    <property type="evidence" value="ECO:0007669"/>
    <property type="project" value="InterPro"/>
</dbReference>
<dbReference type="GO" id="GO:0009236">
    <property type="term" value="P:cobalamin biosynthetic process"/>
    <property type="evidence" value="ECO:0007669"/>
    <property type="project" value="UniProtKB-UniRule"/>
</dbReference>
<dbReference type="CDD" id="cd05389">
    <property type="entry name" value="CobQ_N"/>
    <property type="match status" value="1"/>
</dbReference>
<dbReference type="CDD" id="cd01750">
    <property type="entry name" value="GATase1_CobQ"/>
    <property type="match status" value="1"/>
</dbReference>
<dbReference type="Gene3D" id="3.40.50.880">
    <property type="match status" value="1"/>
</dbReference>
<dbReference type="Gene3D" id="3.40.50.300">
    <property type="entry name" value="P-loop containing nucleotide triphosphate hydrolases"/>
    <property type="match status" value="1"/>
</dbReference>
<dbReference type="HAMAP" id="MF_00028">
    <property type="entry name" value="CobQ"/>
    <property type="match status" value="1"/>
</dbReference>
<dbReference type="InterPro" id="IPR029062">
    <property type="entry name" value="Class_I_gatase-like"/>
</dbReference>
<dbReference type="InterPro" id="IPR002586">
    <property type="entry name" value="CobQ/CobB/MinD/ParA_Nub-bd_dom"/>
</dbReference>
<dbReference type="InterPro" id="IPR033949">
    <property type="entry name" value="CobQ_GATase1"/>
</dbReference>
<dbReference type="InterPro" id="IPR047045">
    <property type="entry name" value="CobQ_N"/>
</dbReference>
<dbReference type="InterPro" id="IPR004459">
    <property type="entry name" value="CobQ_synth"/>
</dbReference>
<dbReference type="InterPro" id="IPR011698">
    <property type="entry name" value="GATase_3"/>
</dbReference>
<dbReference type="InterPro" id="IPR027417">
    <property type="entry name" value="P-loop_NTPase"/>
</dbReference>
<dbReference type="NCBIfam" id="TIGR00313">
    <property type="entry name" value="cobQ"/>
    <property type="match status" value="1"/>
</dbReference>
<dbReference type="NCBIfam" id="NF001989">
    <property type="entry name" value="PRK00784.1"/>
    <property type="match status" value="1"/>
</dbReference>
<dbReference type="PANTHER" id="PTHR21343:SF1">
    <property type="entry name" value="COBYRIC ACID SYNTHASE"/>
    <property type="match status" value="1"/>
</dbReference>
<dbReference type="PANTHER" id="PTHR21343">
    <property type="entry name" value="DETHIOBIOTIN SYNTHETASE"/>
    <property type="match status" value="1"/>
</dbReference>
<dbReference type="Pfam" id="PF01656">
    <property type="entry name" value="CbiA"/>
    <property type="match status" value="1"/>
</dbReference>
<dbReference type="Pfam" id="PF07685">
    <property type="entry name" value="GATase_3"/>
    <property type="match status" value="1"/>
</dbReference>
<dbReference type="SUPFAM" id="SSF52317">
    <property type="entry name" value="Class I glutamine amidotransferase-like"/>
    <property type="match status" value="1"/>
</dbReference>
<dbReference type="SUPFAM" id="SSF52540">
    <property type="entry name" value="P-loop containing nucleoside triphosphate hydrolases"/>
    <property type="match status" value="1"/>
</dbReference>
<dbReference type="PROSITE" id="PS51274">
    <property type="entry name" value="GATASE_COBBQ"/>
    <property type="match status" value="1"/>
</dbReference>
<sequence>MAKSIMIQGTMSSAGKSLLVTALCRILKQDGYKVAPFKSQNMALNSFITEDGYEMGRAQVVQAEAAGIKPSVLMNPILLKPTTDVGSQVIVNGEVRGNMTASNYFKYKKELIPEIMHSYQTLDKEYDIIVIEGAGSPAEINLKSEDIVNMGMARMANAPVLLVGDIDRGGVFAQLYGTVALLEEEERAMIKGMIINKFRGDVKILEPGLTMLSDRLSPIANIPFVGVVPYTTVDIEEEDSISERFLRKTAKKIDIAVIRLPRISNYTDFHNLERFPNVSVRYISKVSELLEPDMIILPGTKNTIDDLKFLRESGLEAAILKAESKDTLIFGICGGYQMLGEWLHDPYGVEGGGEIKGLSLLPINTVFAKEKVRKQNSGTLNKVAGMLSGLSGKTYQGYEIHMGESTWSSKVEEEKNNCFSNKDEENLEHNTITSVLISNGAHVYGTYLHGIFDEEGICKEIIGTLCKRKGIDFEEVYEFDYKQYKEEQYDKLADAVRSSLDMKKIYQIMEEGV</sequence>
<protein>
    <recommendedName>
        <fullName evidence="1">Cobyric acid synthase</fullName>
    </recommendedName>
</protein>
<proteinExistence type="inferred from homology"/>
<organism>
    <name type="scientific">Lachnoclostridium phytofermentans (strain ATCC 700394 / DSM 18823 / ISDg)</name>
    <name type="common">Clostridium phytofermentans</name>
    <dbReference type="NCBI Taxonomy" id="357809"/>
    <lineage>
        <taxon>Bacteria</taxon>
        <taxon>Bacillati</taxon>
        <taxon>Bacillota</taxon>
        <taxon>Clostridia</taxon>
        <taxon>Lachnospirales</taxon>
        <taxon>Lachnospiraceae</taxon>
    </lineage>
</organism>
<accession>A9KMP5</accession>
<name>COBQ_LACP7</name>
<evidence type="ECO:0000255" key="1">
    <source>
        <dbReference type="HAMAP-Rule" id="MF_00028"/>
    </source>
</evidence>
<reference key="1">
    <citation type="submission" date="2007-11" db="EMBL/GenBank/DDBJ databases">
        <title>Complete genome sequence of Clostridium phytofermentans ISDg.</title>
        <authorList>
            <person name="Leschine S.B."/>
            <person name="Warnick T.A."/>
            <person name="Blanchard J.L."/>
            <person name="Schnell D.J."/>
            <person name="Petit E.L."/>
            <person name="LaTouf W.G."/>
            <person name="Copeland A."/>
            <person name="Lucas S."/>
            <person name="Lapidus A."/>
            <person name="Barry K."/>
            <person name="Glavina del Rio T."/>
            <person name="Dalin E."/>
            <person name="Tice H."/>
            <person name="Pitluck S."/>
            <person name="Kiss H."/>
            <person name="Brettin T."/>
            <person name="Bruce D."/>
            <person name="Detter J.C."/>
            <person name="Han C."/>
            <person name="Kuske C."/>
            <person name="Schmutz J."/>
            <person name="Larimer F."/>
            <person name="Land M."/>
            <person name="Hauser L."/>
            <person name="Kyrpides N."/>
            <person name="Kim E.A."/>
            <person name="Richardson P."/>
        </authorList>
    </citation>
    <scope>NUCLEOTIDE SEQUENCE [LARGE SCALE GENOMIC DNA]</scope>
    <source>
        <strain>ATCC 700394 / DSM 18823 / ISDg</strain>
    </source>
</reference>
<gene>
    <name evidence="1" type="primary">cobQ</name>
    <name type="ordered locus">Cphy_1112</name>
</gene>